<feature type="signal peptide" evidence="1">
    <location>
        <begin position="1"/>
        <end position="20"/>
    </location>
</feature>
<feature type="chain" id="PRO_1000062249" description="UPF0319 protein YccT">
    <location>
        <begin position="21"/>
        <end position="220"/>
    </location>
</feature>
<sequence>MKTGIVTTLIALCLPVSVFATTLRLSTDVDLLVLDGKKVSSSLLRGADSIELDNGPHQLVFRVEKTIHLSNSEERLYISPPLVVSFNTQLINQVNFRLPRLENEREANHFDAAPRLELLDGDATPIPVKLDILAITSTAKTIDYEVEVERYNKSAKRASLPQFATMMADDSTLLSGVSELDAIPPQSQVLTEQRLKYWFKLADPQTRNTFLQWAEKQPSS</sequence>
<proteinExistence type="inferred from homology"/>
<dbReference type="EMBL" id="CP000800">
    <property type="protein sequence ID" value="ABV18379.1"/>
    <property type="molecule type" value="Genomic_DNA"/>
</dbReference>
<dbReference type="RefSeq" id="WP_000847791.1">
    <property type="nucleotide sequence ID" value="NC_009801.1"/>
</dbReference>
<dbReference type="KEGG" id="ecw:EcE24377A_1079"/>
<dbReference type="HOGENOM" id="CLU_073782_2_0_6"/>
<dbReference type="Proteomes" id="UP000001122">
    <property type="component" value="Chromosome"/>
</dbReference>
<dbReference type="HAMAP" id="MF_00789">
    <property type="entry name" value="UPF0319"/>
    <property type="match status" value="1"/>
</dbReference>
<dbReference type="InterPro" id="IPR018635">
    <property type="entry name" value="UPF0319"/>
</dbReference>
<dbReference type="NCBIfam" id="NF047712">
    <property type="entry name" value="CrliSynInhib"/>
    <property type="match status" value="1"/>
</dbReference>
<dbReference type="NCBIfam" id="NF002967">
    <property type="entry name" value="PRK03641.1"/>
    <property type="match status" value="1"/>
</dbReference>
<dbReference type="PANTHER" id="PTHR38108">
    <property type="entry name" value="UPF0319 PROTEIN YCCT"/>
    <property type="match status" value="1"/>
</dbReference>
<dbReference type="PANTHER" id="PTHR38108:SF1">
    <property type="entry name" value="UPF0319 PROTEIN YCCT"/>
    <property type="match status" value="1"/>
</dbReference>
<dbReference type="Pfam" id="PF09829">
    <property type="entry name" value="DUF2057"/>
    <property type="match status" value="1"/>
</dbReference>
<protein>
    <recommendedName>
        <fullName evidence="1">UPF0319 protein YccT</fullName>
    </recommendedName>
</protein>
<gene>
    <name evidence="1" type="primary">yccT</name>
    <name type="ordered locus">EcE24377A_1079</name>
</gene>
<name>YCCT_ECO24</name>
<accession>A7ZK68</accession>
<keyword id="KW-1185">Reference proteome</keyword>
<keyword id="KW-0732">Signal</keyword>
<evidence type="ECO:0000255" key="1">
    <source>
        <dbReference type="HAMAP-Rule" id="MF_00789"/>
    </source>
</evidence>
<organism>
    <name type="scientific">Escherichia coli O139:H28 (strain E24377A / ETEC)</name>
    <dbReference type="NCBI Taxonomy" id="331111"/>
    <lineage>
        <taxon>Bacteria</taxon>
        <taxon>Pseudomonadati</taxon>
        <taxon>Pseudomonadota</taxon>
        <taxon>Gammaproteobacteria</taxon>
        <taxon>Enterobacterales</taxon>
        <taxon>Enterobacteriaceae</taxon>
        <taxon>Escherichia</taxon>
    </lineage>
</organism>
<reference key="1">
    <citation type="journal article" date="2008" name="J. Bacteriol.">
        <title>The pangenome structure of Escherichia coli: comparative genomic analysis of E. coli commensal and pathogenic isolates.</title>
        <authorList>
            <person name="Rasko D.A."/>
            <person name="Rosovitz M.J."/>
            <person name="Myers G.S.A."/>
            <person name="Mongodin E.F."/>
            <person name="Fricke W.F."/>
            <person name="Gajer P."/>
            <person name="Crabtree J."/>
            <person name="Sebaihia M."/>
            <person name="Thomson N.R."/>
            <person name="Chaudhuri R."/>
            <person name="Henderson I.R."/>
            <person name="Sperandio V."/>
            <person name="Ravel J."/>
        </authorList>
    </citation>
    <scope>NUCLEOTIDE SEQUENCE [LARGE SCALE GENOMIC DNA]</scope>
    <source>
        <strain>E24377A / ETEC</strain>
    </source>
</reference>
<comment type="similarity">
    <text evidence="1">Belongs to the UPF0319 family.</text>
</comment>